<sequence>MREIVCVQAGQCGNQIGSKFWEVISDEHGVDPTGTYQGDSDLQLERINVYFDEATGGRYVPRAVLIDLEPGTMDSVRAGPYGQIFRPDNFIFGQSGAGNNWAKGHYTEGAELIDSVLDVCRKEAESCDCLQGFQICHSLGGGTGSGMGTLLISKLREEYPDRIMMTFSIIPSPKVSDTVVEPYNTTLSVHQLVENSDESMCIDNEALYDICFRTLKLTTPTFGDLNHLVSAVVSGVTCCLRFPGQLNSDLRKLAVNLVPFPRLHFFMMGFAPLSSRGSQQYRGLSVPDVTQQMFDAKNMMQAADPAHGRYLTASALFRGRMSTKEVDEQMLNVQNKNSSYFIEWIPNNIKSSICDIPPKGLKMAVTFVGNNTCIQEMFRRVGEQFTAMFRRKAFLHWYTGEGMDEMEFTEAESNMNDLVSEYQQYQDATIEEEGEFDEEEQY</sequence>
<keyword id="KW-0963">Cytoplasm</keyword>
<keyword id="KW-0206">Cytoskeleton</keyword>
<keyword id="KW-0342">GTP-binding</keyword>
<keyword id="KW-0460">Magnesium</keyword>
<keyword id="KW-0479">Metal-binding</keyword>
<keyword id="KW-0493">Microtubule</keyword>
<keyword id="KW-0547">Nucleotide-binding</keyword>
<comment type="function">
    <text>Tubulin is the major constituent of microtubules, a cylinder consisting of laterally associated linear protofilaments composed of alpha- and beta-tubulin heterodimers. Microtubules grow by the addition of GTP-tubulin dimers to the microtubule end, where a stabilizing cap forms. Below the cap, tubulin dimers are in GDP-bound state, owing to GTPase activity of alpha-tubulin.</text>
</comment>
<comment type="cofactor">
    <cofactor evidence="1">
        <name>Mg(2+)</name>
        <dbReference type="ChEBI" id="CHEBI:18420"/>
    </cofactor>
</comment>
<comment type="subunit">
    <text>Dimer of alpha and beta chains. A typical microtubule is a hollow water-filled tube with an outer diameter of 25 nm and an inner diameter of 15 nM. Alpha-beta heterodimers associate head-to-tail to form protofilaments running lengthwise along the microtubule wall with the beta-tubulin subunit facing the microtubule plus end conferring a structural polarity. Microtubules usually have 13 protofilaments but different protofilament numbers can be found in some organisms and specialized cells.</text>
</comment>
<comment type="subcellular location">
    <subcellularLocation>
        <location>Cytoplasm</location>
        <location>Cytoskeleton</location>
    </subcellularLocation>
</comment>
<comment type="similarity">
    <text evidence="3">Belongs to the tubulin family.</text>
</comment>
<proteinExistence type="inferred from homology"/>
<dbReference type="EMBL" id="M97956">
    <property type="protein sequence ID" value="AAA91956.1"/>
    <property type="molecule type" value="Genomic_DNA"/>
</dbReference>
<dbReference type="EMBL" id="M96849">
    <property type="protein sequence ID" value="AAA91958.1"/>
    <property type="molecule type" value="Genomic_DNA"/>
</dbReference>
<dbReference type="EMBL" id="X07145">
    <property type="protein sequence ID" value="CAA30150.1"/>
    <property type="molecule type" value="Genomic_DNA"/>
</dbReference>
<dbReference type="PIR" id="S00269">
    <property type="entry name" value="S00269"/>
</dbReference>
<dbReference type="SMR" id="P08562"/>
<dbReference type="ABCD" id="P08562">
    <property type="antibodies" value="1 sequenced antibody"/>
</dbReference>
<dbReference type="VEuPathDB" id="TriTrypDB:BCY84_04486"/>
<dbReference type="VEuPathDB" id="TriTrypDB:C3747_133g40"/>
<dbReference type="VEuPathDB" id="TriTrypDB:C4B63_333g16"/>
<dbReference type="VEuPathDB" id="TriTrypDB:ECC02_012705"/>
<dbReference type="VEuPathDB" id="TriTrypDB:Tc_MARK_6063"/>
<dbReference type="VEuPathDB" id="TriTrypDB:TcBrA4_0038090"/>
<dbReference type="VEuPathDB" id="TriTrypDB:TcCL_ESM07655"/>
<dbReference type="VEuPathDB" id="TriTrypDB:TcCLB.411235.9"/>
<dbReference type="VEuPathDB" id="TriTrypDB:TcCLB.506563.40"/>
<dbReference type="VEuPathDB" id="TriTrypDB:TcCLB.509695.120"/>
<dbReference type="VEuPathDB" id="TriTrypDB:TCDM_13503"/>
<dbReference type="VEuPathDB" id="TriTrypDB:TcG_07744"/>
<dbReference type="VEuPathDB" id="TriTrypDB:TCSYLVIO_007352"/>
<dbReference type="VEuPathDB" id="TriTrypDB:TcYC6_0022480"/>
<dbReference type="GO" id="GO:0005737">
    <property type="term" value="C:cytoplasm"/>
    <property type="evidence" value="ECO:0007669"/>
    <property type="project" value="UniProtKB-KW"/>
</dbReference>
<dbReference type="GO" id="GO:0005874">
    <property type="term" value="C:microtubule"/>
    <property type="evidence" value="ECO:0007669"/>
    <property type="project" value="UniProtKB-KW"/>
</dbReference>
<dbReference type="GO" id="GO:0005525">
    <property type="term" value="F:GTP binding"/>
    <property type="evidence" value="ECO:0007669"/>
    <property type="project" value="UniProtKB-KW"/>
</dbReference>
<dbReference type="GO" id="GO:0003924">
    <property type="term" value="F:GTPase activity"/>
    <property type="evidence" value="ECO:0007669"/>
    <property type="project" value="InterPro"/>
</dbReference>
<dbReference type="GO" id="GO:0046872">
    <property type="term" value="F:metal ion binding"/>
    <property type="evidence" value="ECO:0007669"/>
    <property type="project" value="UniProtKB-KW"/>
</dbReference>
<dbReference type="GO" id="GO:0005200">
    <property type="term" value="F:structural constituent of cytoskeleton"/>
    <property type="evidence" value="ECO:0007669"/>
    <property type="project" value="InterPro"/>
</dbReference>
<dbReference type="GO" id="GO:0007017">
    <property type="term" value="P:microtubule-based process"/>
    <property type="evidence" value="ECO:0007669"/>
    <property type="project" value="InterPro"/>
</dbReference>
<dbReference type="CDD" id="cd02187">
    <property type="entry name" value="beta_tubulin"/>
    <property type="match status" value="1"/>
</dbReference>
<dbReference type="FunFam" id="1.10.287.600:FF:000002">
    <property type="entry name" value="Tubulin beta chain"/>
    <property type="match status" value="1"/>
</dbReference>
<dbReference type="FunFam" id="3.30.1330.20:FF:000002">
    <property type="entry name" value="Tubulin beta chain"/>
    <property type="match status" value="1"/>
</dbReference>
<dbReference type="FunFam" id="3.40.50.1440:FF:000005">
    <property type="entry name" value="Tubulin beta chain"/>
    <property type="match status" value="1"/>
</dbReference>
<dbReference type="Gene3D" id="1.10.287.600">
    <property type="entry name" value="Helix hairpin bin"/>
    <property type="match status" value="1"/>
</dbReference>
<dbReference type="Gene3D" id="3.30.1330.20">
    <property type="entry name" value="Tubulin/FtsZ, C-terminal domain"/>
    <property type="match status" value="1"/>
</dbReference>
<dbReference type="Gene3D" id="3.40.50.1440">
    <property type="entry name" value="Tubulin/FtsZ, GTPase domain"/>
    <property type="match status" value="1"/>
</dbReference>
<dbReference type="InterPro" id="IPR013838">
    <property type="entry name" value="Beta-tubulin_BS"/>
</dbReference>
<dbReference type="InterPro" id="IPR002453">
    <property type="entry name" value="Beta_tubulin"/>
</dbReference>
<dbReference type="InterPro" id="IPR008280">
    <property type="entry name" value="Tub_FtsZ_C"/>
</dbReference>
<dbReference type="InterPro" id="IPR000217">
    <property type="entry name" value="Tubulin"/>
</dbReference>
<dbReference type="InterPro" id="IPR037103">
    <property type="entry name" value="Tubulin/FtsZ-like_C"/>
</dbReference>
<dbReference type="InterPro" id="IPR018316">
    <property type="entry name" value="Tubulin/FtsZ_2-layer-sand-dom"/>
</dbReference>
<dbReference type="InterPro" id="IPR036525">
    <property type="entry name" value="Tubulin/FtsZ_GTPase_sf"/>
</dbReference>
<dbReference type="InterPro" id="IPR023123">
    <property type="entry name" value="Tubulin_C"/>
</dbReference>
<dbReference type="InterPro" id="IPR017975">
    <property type="entry name" value="Tubulin_CS"/>
</dbReference>
<dbReference type="InterPro" id="IPR003008">
    <property type="entry name" value="Tubulin_FtsZ_GTPase"/>
</dbReference>
<dbReference type="PANTHER" id="PTHR11588">
    <property type="entry name" value="TUBULIN"/>
    <property type="match status" value="1"/>
</dbReference>
<dbReference type="Pfam" id="PF00091">
    <property type="entry name" value="Tubulin"/>
    <property type="match status" value="1"/>
</dbReference>
<dbReference type="Pfam" id="PF03953">
    <property type="entry name" value="Tubulin_C"/>
    <property type="match status" value="1"/>
</dbReference>
<dbReference type="PRINTS" id="PR01163">
    <property type="entry name" value="BETATUBULIN"/>
</dbReference>
<dbReference type="PRINTS" id="PR01161">
    <property type="entry name" value="TUBULIN"/>
</dbReference>
<dbReference type="SMART" id="SM00864">
    <property type="entry name" value="Tubulin"/>
    <property type="match status" value="1"/>
</dbReference>
<dbReference type="SMART" id="SM00865">
    <property type="entry name" value="Tubulin_C"/>
    <property type="match status" value="1"/>
</dbReference>
<dbReference type="SUPFAM" id="SSF55307">
    <property type="entry name" value="Tubulin C-terminal domain-like"/>
    <property type="match status" value="1"/>
</dbReference>
<dbReference type="SUPFAM" id="SSF52490">
    <property type="entry name" value="Tubulin nucleotide-binding domain-like"/>
    <property type="match status" value="1"/>
</dbReference>
<dbReference type="PROSITE" id="PS00227">
    <property type="entry name" value="TUBULIN"/>
    <property type="match status" value="1"/>
</dbReference>
<dbReference type="PROSITE" id="PS00228">
    <property type="entry name" value="TUBULIN_B_AUTOREG"/>
    <property type="match status" value="1"/>
</dbReference>
<organism>
    <name type="scientific">Trypanosoma cruzi</name>
    <dbReference type="NCBI Taxonomy" id="5693"/>
    <lineage>
        <taxon>Eukaryota</taxon>
        <taxon>Discoba</taxon>
        <taxon>Euglenozoa</taxon>
        <taxon>Kinetoplastea</taxon>
        <taxon>Metakinetoplastina</taxon>
        <taxon>Trypanosomatida</taxon>
        <taxon>Trypanosomatidae</taxon>
        <taxon>Trypanosoma</taxon>
        <taxon>Schizotrypanum</taxon>
    </lineage>
</organism>
<evidence type="ECO:0000250" key="1">
    <source>
        <dbReference type="UniProtKB" id="P68363"/>
    </source>
</evidence>
<evidence type="ECO:0000250" key="2">
    <source>
        <dbReference type="UniProtKB" id="Q13509"/>
    </source>
</evidence>
<evidence type="ECO:0000305" key="3"/>
<protein>
    <recommendedName>
        <fullName>Tubulin beta chain</fullName>
    </recommendedName>
    <alternativeName>
        <fullName>Beta-tubulin</fullName>
    </alternativeName>
</protein>
<name>TBB_TRYCR</name>
<accession>P08562</accession>
<accession>Q27915</accession>
<feature type="chain" id="PRO_0000048320" description="Tubulin beta chain">
    <location>
        <begin position="1"/>
        <end position="442"/>
    </location>
</feature>
<feature type="binding site" evidence="2">
    <location>
        <position position="11"/>
    </location>
    <ligand>
        <name>GTP</name>
        <dbReference type="ChEBI" id="CHEBI:37565"/>
    </ligand>
</feature>
<feature type="binding site" evidence="1">
    <location>
        <position position="69"/>
    </location>
    <ligand>
        <name>GTP</name>
        <dbReference type="ChEBI" id="CHEBI:37565"/>
    </ligand>
</feature>
<feature type="binding site" evidence="1">
    <location>
        <position position="69"/>
    </location>
    <ligand>
        <name>Mg(2+)</name>
        <dbReference type="ChEBI" id="CHEBI:18420"/>
    </ligand>
</feature>
<feature type="binding site" evidence="2">
    <location>
        <position position="138"/>
    </location>
    <ligand>
        <name>GTP</name>
        <dbReference type="ChEBI" id="CHEBI:37565"/>
    </ligand>
</feature>
<feature type="binding site" evidence="2">
    <location>
        <position position="142"/>
    </location>
    <ligand>
        <name>GTP</name>
        <dbReference type="ChEBI" id="CHEBI:37565"/>
    </ligand>
</feature>
<feature type="binding site" evidence="2">
    <location>
        <position position="143"/>
    </location>
    <ligand>
        <name>GTP</name>
        <dbReference type="ChEBI" id="CHEBI:37565"/>
    </ligand>
</feature>
<feature type="binding site" evidence="2">
    <location>
        <position position="144"/>
    </location>
    <ligand>
        <name>GTP</name>
        <dbReference type="ChEBI" id="CHEBI:37565"/>
    </ligand>
</feature>
<feature type="binding site" evidence="2">
    <location>
        <position position="204"/>
    </location>
    <ligand>
        <name>GTP</name>
        <dbReference type="ChEBI" id="CHEBI:37565"/>
    </ligand>
</feature>
<feature type="binding site" evidence="2">
    <location>
        <position position="226"/>
    </location>
    <ligand>
        <name>GTP</name>
        <dbReference type="ChEBI" id="CHEBI:37565"/>
    </ligand>
</feature>
<feature type="sequence conflict" description="In Ref. 2; CAA30150." evidence="3" ref="2">
    <original>TPTFG</original>
    <variation>APNVR</variation>
    <location>
        <begin position="219"/>
        <end position="223"/>
    </location>
</feature>
<feature type="sequence conflict" description="In Ref. 2; CAA30150." evidence="3" ref="2">
    <original>FFMMG</original>
    <variation>LIMTC</variation>
    <location>
        <begin position="265"/>
        <end position="269"/>
    </location>
</feature>
<feature type="sequence conflict" description="In Ref. 2; CAA30150." evidence="3" ref="2">
    <original>SSRGS</original>
    <variation>TSPAR</variation>
    <location>
        <begin position="274"/>
        <end position="278"/>
    </location>
</feature>
<feature type="sequence conflict" description="In Ref. 2; CAA30150." evidence="3" ref="2">
    <original>DV</original>
    <variation>EL</variation>
    <location>
        <begin position="288"/>
        <end position="289"/>
    </location>
</feature>
<feature type="sequence conflict" description="In Ref. 2." evidence="3" ref="2">
    <original>DAKNM</original>
    <variation>ECQNL</variation>
    <location>
        <begin position="295"/>
        <end position="299"/>
    </location>
</feature>
<reference key="1">
    <citation type="submission" date="1996-03" db="EMBL/GenBank/DDBJ databases">
        <authorList>
            <person name="Amorim M.I."/>
            <person name="Traub-Cseko Y.M."/>
        </authorList>
    </citation>
    <scope>NUCLEOTIDE SEQUENCE [GENOMIC DNA]</scope>
    <source>
        <strain>DM28</strain>
    </source>
</reference>
<reference key="2">
    <citation type="journal article" date="1988" name="Eur. J. Biochem.">
        <title>The tubulin genes of Trypanosoma cruzi.</title>
        <authorList>
            <person name="Maingon R."/>
            <person name="Gerke R."/>
            <person name="Rodriguez M."/>
            <person name="Urbina J."/>
            <person name="Hoenicka J."/>
            <person name="Negri S."/>
            <person name="Aguirre T."/>
            <person name="Nehlin J."/>
            <person name="Knapp T."/>
            <person name="Crampton J."/>
        </authorList>
    </citation>
    <scope>NUCLEOTIDE SEQUENCE [GENOMIC DNA] OF 203-299</scope>
    <source>
        <strain>Stock EP</strain>
    </source>
</reference>